<sequence length="98" mass="10888">MNQTAILICCLVFLTLSGIQGIPLSRTVRCTCISISNQPVNPRSLEKLEIIPPSQFCPHVEIIATMKKKGEKRCLNPESKAIKNLLKAVSKERSKRSP</sequence>
<evidence type="ECO:0000250" key="1"/>
<evidence type="ECO:0000305" key="2"/>
<proteinExistence type="inferred from homology"/>
<organism>
    <name type="scientific">Macaca mulatta</name>
    <name type="common">Rhesus macaque</name>
    <dbReference type="NCBI Taxonomy" id="9544"/>
    <lineage>
        <taxon>Eukaryota</taxon>
        <taxon>Metazoa</taxon>
        <taxon>Chordata</taxon>
        <taxon>Craniata</taxon>
        <taxon>Vertebrata</taxon>
        <taxon>Euteleostomi</taxon>
        <taxon>Mammalia</taxon>
        <taxon>Eutheria</taxon>
        <taxon>Euarchontoglires</taxon>
        <taxon>Primates</taxon>
        <taxon>Haplorrhini</taxon>
        <taxon>Catarrhini</taxon>
        <taxon>Cercopithecidae</taxon>
        <taxon>Cercopithecinae</taxon>
        <taxon>Macaca</taxon>
    </lineage>
</organism>
<keyword id="KW-0145">Chemotaxis</keyword>
<keyword id="KW-0164">Citrullination</keyword>
<keyword id="KW-0202">Cytokine</keyword>
<keyword id="KW-1015">Disulfide bond</keyword>
<keyword id="KW-0395">Inflammatory response</keyword>
<keyword id="KW-1185">Reference proteome</keyword>
<keyword id="KW-0964">Secreted</keyword>
<keyword id="KW-0732">Signal</keyword>
<protein>
    <recommendedName>
        <fullName>C-X-C motif chemokine 10</fullName>
    </recommendedName>
    <alternativeName>
        <fullName>10 kDa interferon gamma-induced protein</fullName>
        <shortName>Gamma-IP10</shortName>
        <shortName>IP-10</shortName>
    </alternativeName>
    <alternativeName>
        <fullName>Small-inducible cytokine B10</fullName>
    </alternativeName>
</protein>
<gene>
    <name type="primary">CXCL10</name>
    <name type="synonym">SCYB10</name>
</gene>
<dbReference type="EMBL" id="AY044446">
    <property type="protein sequence ID" value="AAK95955.1"/>
    <property type="molecule type" value="mRNA"/>
</dbReference>
<dbReference type="RefSeq" id="NP_001028064.1">
    <property type="nucleotide sequence ID" value="NM_001032892.1"/>
</dbReference>
<dbReference type="SMR" id="Q8MIZ1"/>
<dbReference type="FunCoup" id="Q8MIZ1">
    <property type="interactions" value="842"/>
</dbReference>
<dbReference type="STRING" id="9544.ENSMMUP00000027500"/>
<dbReference type="PaxDb" id="9544-ENSMMUP00000027500"/>
<dbReference type="ABCD" id="Q8MIZ1">
    <property type="antibodies" value="15 sequenced antibodies"/>
</dbReference>
<dbReference type="GeneID" id="574243"/>
<dbReference type="KEGG" id="mcc:574243"/>
<dbReference type="CTD" id="3627"/>
<dbReference type="eggNOG" id="ENOG502S7MM">
    <property type="taxonomic scope" value="Eukaryota"/>
</dbReference>
<dbReference type="InParanoid" id="Q8MIZ1"/>
<dbReference type="OrthoDB" id="9948647at2759"/>
<dbReference type="Proteomes" id="UP000006718">
    <property type="component" value="Unassembled WGS sequence"/>
</dbReference>
<dbReference type="GO" id="GO:0005615">
    <property type="term" value="C:extracellular space"/>
    <property type="evidence" value="ECO:0000318"/>
    <property type="project" value="GO_Central"/>
</dbReference>
<dbReference type="GO" id="GO:0008009">
    <property type="term" value="F:chemokine activity"/>
    <property type="evidence" value="ECO:0000250"/>
    <property type="project" value="UniProtKB"/>
</dbReference>
<dbReference type="GO" id="GO:0045236">
    <property type="term" value="F:CXCR chemokine receptor binding"/>
    <property type="evidence" value="ECO:0000318"/>
    <property type="project" value="GO_Central"/>
</dbReference>
<dbReference type="GO" id="GO:0048248">
    <property type="term" value="F:CXCR3 chemokine receptor binding"/>
    <property type="evidence" value="ECO:0000250"/>
    <property type="project" value="UniProtKB"/>
</dbReference>
<dbReference type="GO" id="GO:0007189">
    <property type="term" value="P:adenylate cyclase-activating G protein-coupled receptor signaling pathway"/>
    <property type="evidence" value="ECO:0000250"/>
    <property type="project" value="UniProtKB"/>
</dbReference>
<dbReference type="GO" id="GO:0071222">
    <property type="term" value="P:cellular response to lipopolysaccharide"/>
    <property type="evidence" value="ECO:0000318"/>
    <property type="project" value="GO_Central"/>
</dbReference>
<dbReference type="GO" id="GO:0070098">
    <property type="term" value="P:chemokine-mediated signaling pathway"/>
    <property type="evidence" value="ECO:0000318"/>
    <property type="project" value="GO_Central"/>
</dbReference>
<dbReference type="GO" id="GO:0006935">
    <property type="term" value="P:chemotaxis"/>
    <property type="evidence" value="ECO:0000250"/>
    <property type="project" value="UniProtKB"/>
</dbReference>
<dbReference type="GO" id="GO:0007186">
    <property type="term" value="P:G protein-coupled receptor signaling pathway"/>
    <property type="evidence" value="ECO:0000250"/>
    <property type="project" value="UniProtKB"/>
</dbReference>
<dbReference type="GO" id="GO:0006955">
    <property type="term" value="P:immune response"/>
    <property type="evidence" value="ECO:0007669"/>
    <property type="project" value="InterPro"/>
</dbReference>
<dbReference type="GO" id="GO:0006954">
    <property type="term" value="P:inflammatory response"/>
    <property type="evidence" value="ECO:0000318"/>
    <property type="project" value="GO_Central"/>
</dbReference>
<dbReference type="GO" id="GO:0030593">
    <property type="term" value="P:neutrophil chemotaxis"/>
    <property type="evidence" value="ECO:0000318"/>
    <property type="project" value="GO_Central"/>
</dbReference>
<dbReference type="GO" id="GO:0051281">
    <property type="term" value="P:positive regulation of release of sequestered calcium ion into cytosol"/>
    <property type="evidence" value="ECO:0000250"/>
    <property type="project" value="UniProtKB"/>
</dbReference>
<dbReference type="GO" id="GO:0042127">
    <property type="term" value="P:regulation of cell population proliferation"/>
    <property type="evidence" value="ECO:0000250"/>
    <property type="project" value="UniProtKB"/>
</dbReference>
<dbReference type="CDD" id="cd00273">
    <property type="entry name" value="Chemokine_CXC"/>
    <property type="match status" value="1"/>
</dbReference>
<dbReference type="FunFam" id="2.40.50.40:FF:000004">
    <property type="entry name" value="C-X-C motif chemokine"/>
    <property type="match status" value="1"/>
</dbReference>
<dbReference type="Gene3D" id="2.40.50.40">
    <property type="match status" value="1"/>
</dbReference>
<dbReference type="InterPro" id="IPR039809">
    <property type="entry name" value="Chemokine_b/g/d"/>
</dbReference>
<dbReference type="InterPro" id="IPR001089">
    <property type="entry name" value="Chemokine_CXC"/>
</dbReference>
<dbReference type="InterPro" id="IPR018048">
    <property type="entry name" value="Chemokine_CXC_CS"/>
</dbReference>
<dbReference type="InterPro" id="IPR001811">
    <property type="entry name" value="Chemokine_IL8-like_dom"/>
</dbReference>
<dbReference type="InterPro" id="IPR033899">
    <property type="entry name" value="CXC_Chemokine_domain"/>
</dbReference>
<dbReference type="InterPro" id="IPR036048">
    <property type="entry name" value="Interleukin_8-like_sf"/>
</dbReference>
<dbReference type="PANTHER" id="PTHR12015:SF188">
    <property type="entry name" value="C-X-C MOTIF CHEMOKINE 10"/>
    <property type="match status" value="1"/>
</dbReference>
<dbReference type="PANTHER" id="PTHR12015">
    <property type="entry name" value="SMALL INDUCIBLE CYTOKINE A"/>
    <property type="match status" value="1"/>
</dbReference>
<dbReference type="Pfam" id="PF00048">
    <property type="entry name" value="IL8"/>
    <property type="match status" value="1"/>
</dbReference>
<dbReference type="PRINTS" id="PR00437">
    <property type="entry name" value="SMALLCYTKCXC"/>
</dbReference>
<dbReference type="SMART" id="SM00199">
    <property type="entry name" value="SCY"/>
    <property type="match status" value="1"/>
</dbReference>
<dbReference type="SUPFAM" id="SSF54117">
    <property type="entry name" value="Interleukin 8-like chemokines"/>
    <property type="match status" value="1"/>
</dbReference>
<dbReference type="PROSITE" id="PS00471">
    <property type="entry name" value="SMALL_CYTOKINES_CXC"/>
    <property type="match status" value="1"/>
</dbReference>
<reference key="1">
    <citation type="submission" date="2001-07" db="EMBL/GenBank/DDBJ databases">
        <title>Increased expression of the interferon-gamma-inducible chemokine Mig/CXCL9 in lymphoid tissues during simian immunodeficiency virus infection in vivo.</title>
        <authorList>
            <person name="Reinhart T.A."/>
            <person name="Fallert B.A."/>
            <person name="Pfeifer M."/>
            <person name="Capuano S. III"/>
            <person name="Rajakumar P."/>
            <person name="Murphey-Corb M."/>
            <person name="Day R."/>
            <person name="Fuller C.L."/>
            <person name="Schaefer T."/>
        </authorList>
    </citation>
    <scope>NUCLEOTIDE SEQUENCE [MRNA]</scope>
    <source>
        <tissue>Lung</tissue>
    </source>
</reference>
<comment type="function">
    <text evidence="1">Chemotactic for monocytes and T-lymphocytes. Binds to CXCR3 (By similarity).</text>
</comment>
<comment type="subcellular location">
    <subcellularLocation>
        <location evidence="1">Secreted</location>
    </subcellularLocation>
</comment>
<comment type="similarity">
    <text evidence="2">Belongs to the intercrine alpha (chemokine CxC) family.</text>
</comment>
<accession>Q8MIZ1</accession>
<feature type="signal peptide" evidence="1">
    <location>
        <begin position="1"/>
        <end position="21"/>
    </location>
</feature>
<feature type="chain" id="PRO_0000005103" description="C-X-C motif chemokine 10">
    <location>
        <begin position="22"/>
        <end position="98"/>
    </location>
</feature>
<feature type="modified residue" description="Citrulline" evidence="1">
    <location>
        <position position="26"/>
    </location>
</feature>
<feature type="disulfide bond" evidence="1">
    <location>
        <begin position="30"/>
        <end position="57"/>
    </location>
</feature>
<feature type="disulfide bond" evidence="1">
    <location>
        <begin position="32"/>
        <end position="74"/>
    </location>
</feature>
<name>CXL10_MACMU</name>